<dbReference type="EC" id="6.3.4.20" evidence="1"/>
<dbReference type="EMBL" id="CP000554">
    <property type="protein sequence ID" value="ABM79697.1"/>
    <property type="status" value="ALT_INIT"/>
    <property type="molecule type" value="Genomic_DNA"/>
</dbReference>
<dbReference type="RefSeq" id="WP_041375288.1">
    <property type="nucleotide sequence ID" value="NC_008820.1"/>
</dbReference>
<dbReference type="SMR" id="A2CDY7"/>
<dbReference type="STRING" id="59922.P9303_29671"/>
<dbReference type="KEGG" id="pmf:P9303_29671"/>
<dbReference type="HOGENOM" id="CLU_081854_1_0_3"/>
<dbReference type="BioCyc" id="PMAR59922:G1G80-2603-MONOMER"/>
<dbReference type="UniPathway" id="UPA00391"/>
<dbReference type="Proteomes" id="UP000002274">
    <property type="component" value="Chromosome"/>
</dbReference>
<dbReference type="GO" id="GO:0005524">
    <property type="term" value="F:ATP binding"/>
    <property type="evidence" value="ECO:0007669"/>
    <property type="project" value="UniProtKB-UniRule"/>
</dbReference>
<dbReference type="GO" id="GO:0016879">
    <property type="term" value="F:ligase activity, forming carbon-nitrogen bonds"/>
    <property type="evidence" value="ECO:0007669"/>
    <property type="project" value="UniProtKB-UniRule"/>
</dbReference>
<dbReference type="GO" id="GO:0008270">
    <property type="term" value="F:zinc ion binding"/>
    <property type="evidence" value="ECO:0007669"/>
    <property type="project" value="UniProtKB-UniRule"/>
</dbReference>
<dbReference type="GO" id="GO:0008616">
    <property type="term" value="P:queuosine biosynthetic process"/>
    <property type="evidence" value="ECO:0007669"/>
    <property type="project" value="UniProtKB-UniRule"/>
</dbReference>
<dbReference type="CDD" id="cd01995">
    <property type="entry name" value="QueC-like"/>
    <property type="match status" value="1"/>
</dbReference>
<dbReference type="Gene3D" id="3.40.50.620">
    <property type="entry name" value="HUPs"/>
    <property type="match status" value="1"/>
</dbReference>
<dbReference type="HAMAP" id="MF_01633">
    <property type="entry name" value="QueC"/>
    <property type="match status" value="1"/>
</dbReference>
<dbReference type="InterPro" id="IPR018317">
    <property type="entry name" value="QueC"/>
</dbReference>
<dbReference type="InterPro" id="IPR014729">
    <property type="entry name" value="Rossmann-like_a/b/a_fold"/>
</dbReference>
<dbReference type="NCBIfam" id="TIGR00364">
    <property type="entry name" value="7-cyano-7-deazaguanine synthase QueC"/>
    <property type="match status" value="1"/>
</dbReference>
<dbReference type="PANTHER" id="PTHR42914">
    <property type="entry name" value="7-CYANO-7-DEAZAGUANINE SYNTHASE"/>
    <property type="match status" value="1"/>
</dbReference>
<dbReference type="PANTHER" id="PTHR42914:SF1">
    <property type="entry name" value="7-CYANO-7-DEAZAGUANINE SYNTHASE"/>
    <property type="match status" value="1"/>
</dbReference>
<dbReference type="Pfam" id="PF06508">
    <property type="entry name" value="QueC"/>
    <property type="match status" value="1"/>
</dbReference>
<dbReference type="PIRSF" id="PIRSF006293">
    <property type="entry name" value="ExsB"/>
    <property type="match status" value="1"/>
</dbReference>
<dbReference type="SUPFAM" id="SSF52402">
    <property type="entry name" value="Adenine nucleotide alpha hydrolases-like"/>
    <property type="match status" value="1"/>
</dbReference>
<reference key="1">
    <citation type="journal article" date="2007" name="PLoS Genet.">
        <title>Patterns and implications of gene gain and loss in the evolution of Prochlorococcus.</title>
        <authorList>
            <person name="Kettler G.C."/>
            <person name="Martiny A.C."/>
            <person name="Huang K."/>
            <person name="Zucker J."/>
            <person name="Coleman M.L."/>
            <person name="Rodrigue S."/>
            <person name="Chen F."/>
            <person name="Lapidus A."/>
            <person name="Ferriera S."/>
            <person name="Johnson J."/>
            <person name="Steglich C."/>
            <person name="Church G.M."/>
            <person name="Richardson P."/>
            <person name="Chisholm S.W."/>
        </authorList>
    </citation>
    <scope>NUCLEOTIDE SEQUENCE [LARGE SCALE GENOMIC DNA]</scope>
    <source>
        <strain>MIT 9303</strain>
    </source>
</reference>
<sequence length="226" mass="24060">MSDSTTIALLSGGLDSATAAALAIEAGQKVIGLSFDYGQRHRKELQAAEELAACMGLTEHHVISVNLGSWGGSSLTDLTQTVPSEGVVDGVIPNTYVPGRNTVFIAIGLSLAEARHANRLVLGVNAMDYSGYPDCRPDYLKAYQSLADLANKAGREGHGIKLWAPLMHWHKKRIVQEALRLGVPIDKTWSCYSGGDHACGICDSCRIRDAALSEAGRSDLCSKPAP</sequence>
<name>QUEC_PROM3</name>
<accession>A2CDY7</accession>
<feature type="chain" id="PRO_0000336930" description="7-cyano-7-deazaguanine synthase">
    <location>
        <begin position="1"/>
        <end position="226"/>
    </location>
</feature>
<feature type="binding site" evidence="1">
    <location>
        <begin position="10"/>
        <end position="20"/>
    </location>
    <ligand>
        <name>ATP</name>
        <dbReference type="ChEBI" id="CHEBI:30616"/>
    </ligand>
</feature>
<feature type="binding site" evidence="1">
    <location>
        <position position="191"/>
    </location>
    <ligand>
        <name>Zn(2+)</name>
        <dbReference type="ChEBI" id="CHEBI:29105"/>
    </ligand>
</feature>
<feature type="binding site" evidence="1">
    <location>
        <position position="199"/>
    </location>
    <ligand>
        <name>Zn(2+)</name>
        <dbReference type="ChEBI" id="CHEBI:29105"/>
    </ligand>
</feature>
<feature type="binding site" evidence="1">
    <location>
        <position position="202"/>
    </location>
    <ligand>
        <name>Zn(2+)</name>
        <dbReference type="ChEBI" id="CHEBI:29105"/>
    </ligand>
</feature>
<feature type="binding site" evidence="1">
    <location>
        <position position="205"/>
    </location>
    <ligand>
        <name>Zn(2+)</name>
        <dbReference type="ChEBI" id="CHEBI:29105"/>
    </ligand>
</feature>
<comment type="function">
    <text evidence="1">Catalyzes the ATP-dependent conversion of 7-carboxy-7-deazaguanine (CDG) to 7-cyano-7-deazaguanine (preQ(0)).</text>
</comment>
<comment type="catalytic activity">
    <reaction evidence="1">
        <text>7-carboxy-7-deazaguanine + NH4(+) + ATP = 7-cyano-7-deazaguanine + ADP + phosphate + H2O + H(+)</text>
        <dbReference type="Rhea" id="RHEA:27982"/>
        <dbReference type="ChEBI" id="CHEBI:15377"/>
        <dbReference type="ChEBI" id="CHEBI:15378"/>
        <dbReference type="ChEBI" id="CHEBI:28938"/>
        <dbReference type="ChEBI" id="CHEBI:30616"/>
        <dbReference type="ChEBI" id="CHEBI:43474"/>
        <dbReference type="ChEBI" id="CHEBI:45075"/>
        <dbReference type="ChEBI" id="CHEBI:61036"/>
        <dbReference type="ChEBI" id="CHEBI:456216"/>
        <dbReference type="EC" id="6.3.4.20"/>
    </reaction>
</comment>
<comment type="cofactor">
    <cofactor evidence="1">
        <name>Zn(2+)</name>
        <dbReference type="ChEBI" id="CHEBI:29105"/>
    </cofactor>
    <text evidence="1">Binds 1 zinc ion per subunit.</text>
</comment>
<comment type="pathway">
    <text evidence="1">Purine metabolism; 7-cyano-7-deazaguanine biosynthesis.</text>
</comment>
<comment type="similarity">
    <text evidence="1">Belongs to the QueC family.</text>
</comment>
<comment type="sequence caution" evidence="2">
    <conflict type="erroneous initiation">
        <sequence resource="EMBL-CDS" id="ABM79697"/>
    </conflict>
</comment>
<protein>
    <recommendedName>
        <fullName evidence="1">7-cyano-7-deazaguanine synthase</fullName>
        <ecNumber evidence="1">6.3.4.20</ecNumber>
    </recommendedName>
    <alternativeName>
        <fullName evidence="1">7-cyano-7-carbaguanine synthase</fullName>
    </alternativeName>
    <alternativeName>
        <fullName evidence="1">PreQ(0) synthase</fullName>
    </alternativeName>
    <alternativeName>
        <fullName evidence="1">Queuosine biosynthesis protein QueC</fullName>
    </alternativeName>
</protein>
<organism>
    <name type="scientific">Prochlorococcus marinus (strain MIT 9303)</name>
    <dbReference type="NCBI Taxonomy" id="59922"/>
    <lineage>
        <taxon>Bacteria</taxon>
        <taxon>Bacillati</taxon>
        <taxon>Cyanobacteriota</taxon>
        <taxon>Cyanophyceae</taxon>
        <taxon>Synechococcales</taxon>
        <taxon>Prochlorococcaceae</taxon>
        <taxon>Prochlorococcus</taxon>
    </lineage>
</organism>
<evidence type="ECO:0000255" key="1">
    <source>
        <dbReference type="HAMAP-Rule" id="MF_01633"/>
    </source>
</evidence>
<evidence type="ECO:0000305" key="2"/>
<keyword id="KW-0067">ATP-binding</keyword>
<keyword id="KW-0436">Ligase</keyword>
<keyword id="KW-0479">Metal-binding</keyword>
<keyword id="KW-0547">Nucleotide-binding</keyword>
<keyword id="KW-0671">Queuosine biosynthesis</keyword>
<keyword id="KW-0862">Zinc</keyword>
<gene>
    <name evidence="1" type="primary">queC</name>
    <name type="ordered locus">P9303_29671</name>
</gene>
<proteinExistence type="inferred from homology"/>